<dbReference type="EC" id="2.4.2.21" evidence="1"/>
<dbReference type="EMBL" id="CP000148">
    <property type="protein sequence ID" value="ABB30710.1"/>
    <property type="molecule type" value="Genomic_DNA"/>
</dbReference>
<dbReference type="RefSeq" id="WP_004513836.1">
    <property type="nucleotide sequence ID" value="NC_007517.1"/>
</dbReference>
<dbReference type="SMR" id="Q39YG4"/>
<dbReference type="STRING" id="269799.Gmet_0467"/>
<dbReference type="KEGG" id="gme:Gmet_0467"/>
<dbReference type="eggNOG" id="COG2038">
    <property type="taxonomic scope" value="Bacteria"/>
</dbReference>
<dbReference type="HOGENOM" id="CLU_002982_0_0_7"/>
<dbReference type="UniPathway" id="UPA00061">
    <property type="reaction ID" value="UER00516"/>
</dbReference>
<dbReference type="Proteomes" id="UP000007073">
    <property type="component" value="Chromosome"/>
</dbReference>
<dbReference type="GO" id="GO:0008939">
    <property type="term" value="F:nicotinate-nucleotide-dimethylbenzimidazole phosphoribosyltransferase activity"/>
    <property type="evidence" value="ECO:0007669"/>
    <property type="project" value="UniProtKB-UniRule"/>
</dbReference>
<dbReference type="GO" id="GO:0009236">
    <property type="term" value="P:cobalamin biosynthetic process"/>
    <property type="evidence" value="ECO:0007669"/>
    <property type="project" value="UniProtKB-KW"/>
</dbReference>
<dbReference type="CDD" id="cd02439">
    <property type="entry name" value="DMB-PRT_CobT"/>
    <property type="match status" value="1"/>
</dbReference>
<dbReference type="FunFam" id="3.40.50.10210:FF:000001">
    <property type="entry name" value="Nicotinate-nucleotide--dimethylbenzimidazole phosphoribosyltransferase"/>
    <property type="match status" value="1"/>
</dbReference>
<dbReference type="Gene3D" id="1.10.1610.10">
    <property type="match status" value="1"/>
</dbReference>
<dbReference type="Gene3D" id="3.40.50.10210">
    <property type="match status" value="1"/>
</dbReference>
<dbReference type="HAMAP" id="MF_00230">
    <property type="entry name" value="CobT"/>
    <property type="match status" value="1"/>
</dbReference>
<dbReference type="InterPro" id="IPR003200">
    <property type="entry name" value="Nict_dMeBzImd_PRibTrfase"/>
</dbReference>
<dbReference type="InterPro" id="IPR017846">
    <property type="entry name" value="Nict_dMeBzImd_PRibTrfase_bact"/>
</dbReference>
<dbReference type="InterPro" id="IPR023195">
    <property type="entry name" value="Nict_dMeBzImd_PRibTrfase_N"/>
</dbReference>
<dbReference type="InterPro" id="IPR036087">
    <property type="entry name" value="Nict_dMeBzImd_PRibTrfase_sf"/>
</dbReference>
<dbReference type="NCBIfam" id="TIGR03160">
    <property type="entry name" value="cobT_DBIPRT"/>
    <property type="match status" value="1"/>
</dbReference>
<dbReference type="NCBIfam" id="NF000996">
    <property type="entry name" value="PRK00105.1"/>
    <property type="match status" value="1"/>
</dbReference>
<dbReference type="PANTHER" id="PTHR43463">
    <property type="entry name" value="NICOTINATE-NUCLEOTIDE--DIMETHYLBENZIMIDAZOLE PHOSPHORIBOSYLTRANSFERASE"/>
    <property type="match status" value="1"/>
</dbReference>
<dbReference type="PANTHER" id="PTHR43463:SF1">
    <property type="entry name" value="NICOTINATE-NUCLEOTIDE--DIMETHYLBENZIMIDAZOLE PHOSPHORIBOSYLTRANSFERASE"/>
    <property type="match status" value="1"/>
</dbReference>
<dbReference type="Pfam" id="PF02277">
    <property type="entry name" value="DBI_PRT"/>
    <property type="match status" value="1"/>
</dbReference>
<dbReference type="SUPFAM" id="SSF52733">
    <property type="entry name" value="Nicotinate mononucleotide:5,6-dimethylbenzimidazole phosphoribosyltransferase (CobT)"/>
    <property type="match status" value="1"/>
</dbReference>
<organism>
    <name type="scientific">Geobacter metallireducens (strain ATCC 53774 / DSM 7210 / GS-15)</name>
    <dbReference type="NCBI Taxonomy" id="269799"/>
    <lineage>
        <taxon>Bacteria</taxon>
        <taxon>Pseudomonadati</taxon>
        <taxon>Thermodesulfobacteriota</taxon>
        <taxon>Desulfuromonadia</taxon>
        <taxon>Geobacterales</taxon>
        <taxon>Geobacteraceae</taxon>
        <taxon>Geobacter</taxon>
    </lineage>
</organism>
<gene>
    <name evidence="1" type="primary">cobT</name>
    <name type="ordered locus">Gmet_0467</name>
</gene>
<feature type="chain" id="PRO_1000021597" description="Nicotinate-nucleotide--dimethylbenzimidazole phosphoribosyltransferase">
    <location>
        <begin position="1"/>
        <end position="353"/>
    </location>
</feature>
<feature type="active site" description="Proton acceptor" evidence="1">
    <location>
        <position position="318"/>
    </location>
</feature>
<comment type="function">
    <text evidence="1">Catalyzes the synthesis of alpha-ribazole-5'-phosphate from nicotinate mononucleotide (NAMN) and 5,6-dimethylbenzimidazole (DMB).</text>
</comment>
<comment type="catalytic activity">
    <reaction evidence="1">
        <text>5,6-dimethylbenzimidazole + nicotinate beta-D-ribonucleotide = alpha-ribazole 5'-phosphate + nicotinate + H(+)</text>
        <dbReference type="Rhea" id="RHEA:11196"/>
        <dbReference type="ChEBI" id="CHEBI:15378"/>
        <dbReference type="ChEBI" id="CHEBI:15890"/>
        <dbReference type="ChEBI" id="CHEBI:32544"/>
        <dbReference type="ChEBI" id="CHEBI:57502"/>
        <dbReference type="ChEBI" id="CHEBI:57918"/>
        <dbReference type="EC" id="2.4.2.21"/>
    </reaction>
</comment>
<comment type="pathway">
    <text evidence="1">Nucleoside biosynthesis; alpha-ribazole biosynthesis; alpha-ribazole from 5,6-dimethylbenzimidazole: step 1/2.</text>
</comment>
<comment type="similarity">
    <text evidence="1">Belongs to the CobT family.</text>
</comment>
<evidence type="ECO:0000255" key="1">
    <source>
        <dbReference type="HAMAP-Rule" id="MF_00230"/>
    </source>
</evidence>
<reference key="1">
    <citation type="journal article" date="2009" name="BMC Microbiol.">
        <title>The genome sequence of Geobacter metallireducens: features of metabolism, physiology and regulation common and dissimilar to Geobacter sulfurreducens.</title>
        <authorList>
            <person name="Aklujkar M."/>
            <person name="Krushkal J."/>
            <person name="DiBartolo G."/>
            <person name="Lapidus A."/>
            <person name="Land M.L."/>
            <person name="Lovley D.R."/>
        </authorList>
    </citation>
    <scope>NUCLEOTIDE SEQUENCE [LARGE SCALE GENOMIC DNA]</scope>
    <source>
        <strain>ATCC 53774 / DSM 7210 / GS-15</strain>
    </source>
</reference>
<proteinExistence type="inferred from homology"/>
<keyword id="KW-0169">Cobalamin biosynthesis</keyword>
<keyword id="KW-0328">Glycosyltransferase</keyword>
<keyword id="KW-1185">Reference proteome</keyword>
<keyword id="KW-0808">Transferase</keyword>
<protein>
    <recommendedName>
        <fullName evidence="1">Nicotinate-nucleotide--dimethylbenzimidazole phosphoribosyltransferase</fullName>
        <shortName evidence="1">NN:DBI PRT</shortName>
        <ecNumber evidence="1">2.4.2.21</ecNumber>
    </recommendedName>
    <alternativeName>
        <fullName evidence="1">N(1)-alpha-phosphoribosyltransferase</fullName>
    </alternativeName>
</protein>
<sequence>MTLLTETLSNIRPVDAGLMAQAQARLDNKTKPIGSLGRLEEFARRTVAISGSLDPSTAKKAIFTFAADHGVVEEGVSAFPKEVTVQMVFNFLKGGAGINVLANHVGADVLVVDMGIDHDFGDTPGLIDRKVARGTRNMAKGPAMTREEAVTALEAGIELACGCKADGVAMAGTGEMGIGNTTAASAIIAAFSGKTVADVTHRGTGINDAALAKKVTIIEQALAVNRPDPKDPIDVLAKVGGLEIAGIAGLVLGCAANRIPVVVDGFISTAGALIACELCPTVKEYIFAAHESVEIGHRFMLERIGAEPILDLHLRLGEGTGAALAMGLIEAGVKILKEMATFAEAGVEKGRDQ</sequence>
<accession>Q39YG4</accession>
<name>COBT_GEOMG</name>